<proteinExistence type="inferred from homology"/>
<reference key="1">
    <citation type="journal article" date="1994" name="DNA Res.">
        <title>Systematic sequencing of the 180 kilobase region of the Bacillus subtilis chromosome containing the replication origin.</title>
        <authorList>
            <person name="Ogasawara N."/>
            <person name="Nakai S."/>
            <person name="Yoshikawa H."/>
        </authorList>
    </citation>
    <scope>NUCLEOTIDE SEQUENCE [GENOMIC DNA]</scope>
    <source>
        <strain>168</strain>
    </source>
</reference>
<reference key="2">
    <citation type="journal article" date="1997" name="Nature">
        <title>The complete genome sequence of the Gram-positive bacterium Bacillus subtilis.</title>
        <authorList>
            <person name="Kunst F."/>
            <person name="Ogasawara N."/>
            <person name="Moszer I."/>
            <person name="Albertini A.M."/>
            <person name="Alloni G."/>
            <person name="Azevedo V."/>
            <person name="Bertero M.G."/>
            <person name="Bessieres P."/>
            <person name="Bolotin A."/>
            <person name="Borchert S."/>
            <person name="Borriss R."/>
            <person name="Boursier L."/>
            <person name="Brans A."/>
            <person name="Braun M."/>
            <person name="Brignell S.C."/>
            <person name="Bron S."/>
            <person name="Brouillet S."/>
            <person name="Bruschi C.V."/>
            <person name="Caldwell B."/>
            <person name="Capuano V."/>
            <person name="Carter N.M."/>
            <person name="Choi S.-K."/>
            <person name="Codani J.-J."/>
            <person name="Connerton I.F."/>
            <person name="Cummings N.J."/>
            <person name="Daniel R.A."/>
            <person name="Denizot F."/>
            <person name="Devine K.M."/>
            <person name="Duesterhoeft A."/>
            <person name="Ehrlich S.D."/>
            <person name="Emmerson P.T."/>
            <person name="Entian K.-D."/>
            <person name="Errington J."/>
            <person name="Fabret C."/>
            <person name="Ferrari E."/>
            <person name="Foulger D."/>
            <person name="Fritz C."/>
            <person name="Fujita M."/>
            <person name="Fujita Y."/>
            <person name="Fuma S."/>
            <person name="Galizzi A."/>
            <person name="Galleron N."/>
            <person name="Ghim S.-Y."/>
            <person name="Glaser P."/>
            <person name="Goffeau A."/>
            <person name="Golightly E.J."/>
            <person name="Grandi G."/>
            <person name="Guiseppi G."/>
            <person name="Guy B.J."/>
            <person name="Haga K."/>
            <person name="Haiech J."/>
            <person name="Harwood C.R."/>
            <person name="Henaut A."/>
            <person name="Hilbert H."/>
            <person name="Holsappel S."/>
            <person name="Hosono S."/>
            <person name="Hullo M.-F."/>
            <person name="Itaya M."/>
            <person name="Jones L.-M."/>
            <person name="Joris B."/>
            <person name="Karamata D."/>
            <person name="Kasahara Y."/>
            <person name="Klaerr-Blanchard M."/>
            <person name="Klein C."/>
            <person name="Kobayashi Y."/>
            <person name="Koetter P."/>
            <person name="Koningstein G."/>
            <person name="Krogh S."/>
            <person name="Kumano M."/>
            <person name="Kurita K."/>
            <person name="Lapidus A."/>
            <person name="Lardinois S."/>
            <person name="Lauber J."/>
            <person name="Lazarevic V."/>
            <person name="Lee S.-M."/>
            <person name="Levine A."/>
            <person name="Liu H."/>
            <person name="Masuda S."/>
            <person name="Mauel C."/>
            <person name="Medigue C."/>
            <person name="Medina N."/>
            <person name="Mellado R.P."/>
            <person name="Mizuno M."/>
            <person name="Moestl D."/>
            <person name="Nakai S."/>
            <person name="Noback M."/>
            <person name="Noone D."/>
            <person name="O'Reilly M."/>
            <person name="Ogawa K."/>
            <person name="Ogiwara A."/>
            <person name="Oudega B."/>
            <person name="Park S.-H."/>
            <person name="Parro V."/>
            <person name="Pohl T.M."/>
            <person name="Portetelle D."/>
            <person name="Porwollik S."/>
            <person name="Prescott A.M."/>
            <person name="Presecan E."/>
            <person name="Pujic P."/>
            <person name="Purnelle B."/>
            <person name="Rapoport G."/>
            <person name="Rey M."/>
            <person name="Reynolds S."/>
            <person name="Rieger M."/>
            <person name="Rivolta C."/>
            <person name="Rocha E."/>
            <person name="Roche B."/>
            <person name="Rose M."/>
            <person name="Sadaie Y."/>
            <person name="Sato T."/>
            <person name="Scanlan E."/>
            <person name="Schleich S."/>
            <person name="Schroeter R."/>
            <person name="Scoffone F."/>
            <person name="Sekiguchi J."/>
            <person name="Sekowska A."/>
            <person name="Seror S.J."/>
            <person name="Serror P."/>
            <person name="Shin B.-S."/>
            <person name="Soldo B."/>
            <person name="Sorokin A."/>
            <person name="Tacconi E."/>
            <person name="Takagi T."/>
            <person name="Takahashi H."/>
            <person name="Takemaru K."/>
            <person name="Takeuchi M."/>
            <person name="Tamakoshi A."/>
            <person name="Tanaka T."/>
            <person name="Terpstra P."/>
            <person name="Tognoni A."/>
            <person name="Tosato V."/>
            <person name="Uchiyama S."/>
            <person name="Vandenbol M."/>
            <person name="Vannier F."/>
            <person name="Vassarotti A."/>
            <person name="Viari A."/>
            <person name="Wambutt R."/>
            <person name="Wedler E."/>
            <person name="Wedler H."/>
            <person name="Weitzenegger T."/>
            <person name="Winters P."/>
            <person name="Wipat A."/>
            <person name="Yamamoto H."/>
            <person name="Yamane K."/>
            <person name="Yasumoto K."/>
            <person name="Yata K."/>
            <person name="Yoshida K."/>
            <person name="Yoshikawa H.-F."/>
            <person name="Zumstein E."/>
            <person name="Yoshikawa H."/>
            <person name="Danchin A."/>
        </authorList>
    </citation>
    <scope>NUCLEOTIDE SEQUENCE [LARGE SCALE GENOMIC DNA]</scope>
    <source>
        <strain>168</strain>
    </source>
</reference>
<sequence length="289" mass="31720">MRILEKAPAKINLSLDVTRKRPDGYHEVEMIMTTIDLADRIELTELAEDEVRVSSHNRFVPDDQRNLAYQAAKLIKDRYNVKKGVSIMITKVIPVAAGLAGGSSDAAATLRGLNRLWNLNLSAETLAELGAEIGSDVSFCVYGGTALATGRGEKIKHISTPPHCWVILAKPTIGVSTAEVYRALKLDGIEHPDVQGMIEAIEEKSFQKMCSRLGNVLESVTLDMHPEVAMIKNQMKRFGADAVLMSGSGPTVFGLVQYESKVQRIYNGLRGFCDQVYAVRMIGEQNALD</sequence>
<name>ISPE_BACSU</name>
<evidence type="ECO:0000250" key="1"/>
<evidence type="ECO:0000255" key="2"/>
<evidence type="ECO:0000305" key="3"/>
<dbReference type="EC" id="2.7.1.148"/>
<dbReference type="EMBL" id="D26185">
    <property type="protein sequence ID" value="BAA05281.1"/>
    <property type="molecule type" value="Genomic_DNA"/>
</dbReference>
<dbReference type="EMBL" id="AL009126">
    <property type="protein sequence ID" value="CAB11822.1"/>
    <property type="molecule type" value="Genomic_DNA"/>
</dbReference>
<dbReference type="PIR" id="S66075">
    <property type="entry name" value="S66075"/>
</dbReference>
<dbReference type="RefSeq" id="NP_387927.1">
    <property type="nucleotide sequence ID" value="NC_000964.3"/>
</dbReference>
<dbReference type="RefSeq" id="WP_003226742.1">
    <property type="nucleotide sequence ID" value="NZ_OZ025638.1"/>
</dbReference>
<dbReference type="SMR" id="P37550"/>
<dbReference type="FunCoup" id="P37550">
    <property type="interactions" value="550"/>
</dbReference>
<dbReference type="STRING" id="224308.BSU00460"/>
<dbReference type="PaxDb" id="224308-BSU00460"/>
<dbReference type="EnsemblBacteria" id="CAB11822">
    <property type="protein sequence ID" value="CAB11822"/>
    <property type="gene ID" value="BSU_00460"/>
</dbReference>
<dbReference type="GeneID" id="936970"/>
<dbReference type="KEGG" id="bsu:BSU00460"/>
<dbReference type="PATRIC" id="fig|224308.179.peg.46"/>
<dbReference type="eggNOG" id="COG1947">
    <property type="taxonomic scope" value="Bacteria"/>
</dbReference>
<dbReference type="InParanoid" id="P37550"/>
<dbReference type="OrthoDB" id="9809438at2"/>
<dbReference type="PhylomeDB" id="P37550"/>
<dbReference type="BioCyc" id="BSUB:BSU00460-MONOMER"/>
<dbReference type="BRENDA" id="2.7.1.148">
    <property type="organism ID" value="658"/>
</dbReference>
<dbReference type="UniPathway" id="UPA00056">
    <property type="reaction ID" value="UER00094"/>
</dbReference>
<dbReference type="Proteomes" id="UP000001570">
    <property type="component" value="Chromosome"/>
</dbReference>
<dbReference type="GO" id="GO:0050515">
    <property type="term" value="F:4-(cytidine 5'-diphospho)-2-C-methyl-D-erythritol kinase activity"/>
    <property type="evidence" value="ECO:0000318"/>
    <property type="project" value="GO_Central"/>
</dbReference>
<dbReference type="GO" id="GO:0005524">
    <property type="term" value="F:ATP binding"/>
    <property type="evidence" value="ECO:0007669"/>
    <property type="project" value="UniProtKB-UniRule"/>
</dbReference>
<dbReference type="GO" id="GO:0019288">
    <property type="term" value="P:isopentenyl diphosphate biosynthetic process, methylerythritol 4-phosphate pathway"/>
    <property type="evidence" value="ECO:0007669"/>
    <property type="project" value="UniProtKB-UniRule"/>
</dbReference>
<dbReference type="GO" id="GO:0016114">
    <property type="term" value="P:terpenoid biosynthetic process"/>
    <property type="evidence" value="ECO:0007669"/>
    <property type="project" value="InterPro"/>
</dbReference>
<dbReference type="FunFam" id="3.30.230.10:FF:000029">
    <property type="entry name" value="4-diphosphocytidyl-2-C-methyl-D-erythritol kinase"/>
    <property type="match status" value="1"/>
</dbReference>
<dbReference type="FunFam" id="3.30.70.890:FF:000006">
    <property type="entry name" value="4-diphosphocytidyl-2-C-methyl-D-erythritol kinase"/>
    <property type="match status" value="1"/>
</dbReference>
<dbReference type="Gene3D" id="3.30.230.10">
    <property type="match status" value="1"/>
</dbReference>
<dbReference type="Gene3D" id="3.30.70.890">
    <property type="entry name" value="GHMP kinase, C-terminal domain"/>
    <property type="match status" value="1"/>
</dbReference>
<dbReference type="HAMAP" id="MF_00061">
    <property type="entry name" value="IspE"/>
    <property type="match status" value="1"/>
</dbReference>
<dbReference type="InterPro" id="IPR013750">
    <property type="entry name" value="GHMP_kinase_C_dom"/>
</dbReference>
<dbReference type="InterPro" id="IPR036554">
    <property type="entry name" value="GHMP_kinase_C_sf"/>
</dbReference>
<dbReference type="InterPro" id="IPR006204">
    <property type="entry name" value="GHMP_kinase_N_dom"/>
</dbReference>
<dbReference type="InterPro" id="IPR004424">
    <property type="entry name" value="IspE"/>
</dbReference>
<dbReference type="InterPro" id="IPR020568">
    <property type="entry name" value="Ribosomal_Su5_D2-typ_SF"/>
</dbReference>
<dbReference type="InterPro" id="IPR014721">
    <property type="entry name" value="Ribsml_uS5_D2-typ_fold_subgr"/>
</dbReference>
<dbReference type="NCBIfam" id="TIGR00154">
    <property type="entry name" value="ispE"/>
    <property type="match status" value="1"/>
</dbReference>
<dbReference type="NCBIfam" id="NF011202">
    <property type="entry name" value="PRK14608.1"/>
    <property type="match status" value="1"/>
</dbReference>
<dbReference type="PANTHER" id="PTHR43527">
    <property type="entry name" value="4-DIPHOSPHOCYTIDYL-2-C-METHYL-D-ERYTHRITOL KINASE, CHLOROPLASTIC"/>
    <property type="match status" value="1"/>
</dbReference>
<dbReference type="PANTHER" id="PTHR43527:SF2">
    <property type="entry name" value="4-DIPHOSPHOCYTIDYL-2-C-METHYL-D-ERYTHRITOL KINASE, CHLOROPLASTIC"/>
    <property type="match status" value="1"/>
</dbReference>
<dbReference type="Pfam" id="PF08544">
    <property type="entry name" value="GHMP_kinases_C"/>
    <property type="match status" value="1"/>
</dbReference>
<dbReference type="Pfam" id="PF00288">
    <property type="entry name" value="GHMP_kinases_N"/>
    <property type="match status" value="1"/>
</dbReference>
<dbReference type="PIRSF" id="PIRSF010376">
    <property type="entry name" value="IspE"/>
    <property type="match status" value="1"/>
</dbReference>
<dbReference type="SUPFAM" id="SSF55060">
    <property type="entry name" value="GHMP Kinase, C-terminal domain"/>
    <property type="match status" value="1"/>
</dbReference>
<dbReference type="SUPFAM" id="SSF54211">
    <property type="entry name" value="Ribosomal protein S5 domain 2-like"/>
    <property type="match status" value="1"/>
</dbReference>
<comment type="function">
    <text evidence="1">Catalyzes the phosphorylation of the position 2 hydroxy group of 4-diphosphocytidyl-2C-methyl-D-erythritol.</text>
</comment>
<comment type="catalytic activity">
    <reaction>
        <text>4-CDP-2-C-methyl-D-erythritol + ATP = 4-CDP-2-C-methyl-D-erythritol 2-phosphate + ADP + H(+)</text>
        <dbReference type="Rhea" id="RHEA:18437"/>
        <dbReference type="ChEBI" id="CHEBI:15378"/>
        <dbReference type="ChEBI" id="CHEBI:30616"/>
        <dbReference type="ChEBI" id="CHEBI:57823"/>
        <dbReference type="ChEBI" id="CHEBI:57919"/>
        <dbReference type="ChEBI" id="CHEBI:456216"/>
        <dbReference type="EC" id="2.7.1.148"/>
    </reaction>
</comment>
<comment type="pathway">
    <text>Isoprenoid biosynthesis; isopentenyl diphosphate biosynthesis via DXP pathway; isopentenyl diphosphate from 1-deoxy-D-xylulose 5-phosphate: step 3/6.</text>
</comment>
<comment type="similarity">
    <text evidence="3">Belongs to the GHMP kinase family. IspE subfamily.</text>
</comment>
<protein>
    <recommendedName>
        <fullName>4-diphosphocytidyl-2-C-methyl-D-erythritol kinase</fullName>
        <shortName>CMK</shortName>
        <ecNumber>2.7.1.148</ecNumber>
    </recommendedName>
    <alternativeName>
        <fullName>4-(cytidine-5'-diphospho)-2-C-methyl-D-erythritol kinase</fullName>
    </alternativeName>
</protein>
<accession>P37550</accession>
<gene>
    <name type="primary">ispE</name>
    <name type="synonym">ipk</name>
    <name type="synonym">yabH</name>
    <name type="ordered locus">BSU00460</name>
</gene>
<keyword id="KW-0067">ATP-binding</keyword>
<keyword id="KW-0414">Isoprene biosynthesis</keyword>
<keyword id="KW-0418">Kinase</keyword>
<keyword id="KW-0547">Nucleotide-binding</keyword>
<keyword id="KW-1185">Reference proteome</keyword>
<keyword id="KW-0808">Transferase</keyword>
<organism>
    <name type="scientific">Bacillus subtilis (strain 168)</name>
    <dbReference type="NCBI Taxonomy" id="224308"/>
    <lineage>
        <taxon>Bacteria</taxon>
        <taxon>Bacillati</taxon>
        <taxon>Bacillota</taxon>
        <taxon>Bacilli</taxon>
        <taxon>Bacillales</taxon>
        <taxon>Bacillaceae</taxon>
        <taxon>Bacillus</taxon>
    </lineage>
</organism>
<feature type="chain" id="PRO_0000189188" description="4-diphosphocytidyl-2-C-methyl-D-erythritol kinase">
    <location>
        <begin position="1"/>
        <end position="289"/>
    </location>
</feature>
<feature type="active site" evidence="1">
    <location>
        <position position="10"/>
    </location>
</feature>
<feature type="active site" evidence="1">
    <location>
        <position position="136"/>
    </location>
</feature>
<feature type="binding site" evidence="2">
    <location>
        <begin position="94"/>
        <end position="104"/>
    </location>
    <ligand>
        <name>ATP</name>
        <dbReference type="ChEBI" id="CHEBI:30616"/>
    </ligand>
</feature>